<evidence type="ECO:0000250" key="1"/>
<evidence type="ECO:0000269" key="2">
    <source>
    </source>
</evidence>
<evidence type="ECO:0000305" key="3"/>
<gene>
    <name type="ordered locus">YHR033W</name>
</gene>
<dbReference type="EMBL" id="U00062">
    <property type="protein sequence ID" value="AAB68910.1"/>
    <property type="molecule type" value="Genomic_DNA"/>
</dbReference>
<dbReference type="EMBL" id="AY723823">
    <property type="protein sequence ID" value="AAU09740.1"/>
    <property type="molecule type" value="Genomic_DNA"/>
</dbReference>
<dbReference type="EMBL" id="BK006934">
    <property type="protein sequence ID" value="DAA06724.1"/>
    <property type="molecule type" value="Genomic_DNA"/>
</dbReference>
<dbReference type="PIR" id="S46741">
    <property type="entry name" value="S46741"/>
</dbReference>
<dbReference type="RefSeq" id="NP_011898.1">
    <property type="nucleotide sequence ID" value="NM_001179163.1"/>
</dbReference>
<dbReference type="SMR" id="P38690"/>
<dbReference type="BioGRID" id="36464">
    <property type="interactions" value="67"/>
</dbReference>
<dbReference type="DIP" id="DIP-5036N"/>
<dbReference type="FunCoup" id="P38690">
    <property type="interactions" value="526"/>
</dbReference>
<dbReference type="IntAct" id="P38690">
    <property type="interactions" value="21"/>
</dbReference>
<dbReference type="MINT" id="P38690"/>
<dbReference type="STRING" id="4932.YHR033W"/>
<dbReference type="iPTMnet" id="P38690"/>
<dbReference type="PaxDb" id="4932-YHR033W"/>
<dbReference type="PeptideAtlas" id="P38690"/>
<dbReference type="EnsemblFungi" id="YHR033W_mRNA">
    <property type="protein sequence ID" value="YHR033W"/>
    <property type="gene ID" value="YHR033W"/>
</dbReference>
<dbReference type="GeneID" id="856428"/>
<dbReference type="KEGG" id="sce:YHR033W"/>
<dbReference type="AGR" id="SGD:S000001075"/>
<dbReference type="SGD" id="S000001075">
    <property type="gene designation" value="YHR033W"/>
</dbReference>
<dbReference type="VEuPathDB" id="FungiDB:YHR033W"/>
<dbReference type="eggNOG" id="KOG1154">
    <property type="taxonomic scope" value="Eukaryota"/>
</dbReference>
<dbReference type="GeneTree" id="ENSGT00500000044903"/>
<dbReference type="HOGENOM" id="CLU_025400_1_1_1"/>
<dbReference type="InParanoid" id="P38690"/>
<dbReference type="OMA" id="TNPRKDP"/>
<dbReference type="OrthoDB" id="409889at2759"/>
<dbReference type="BioCyc" id="YEAST:G3O-31093-MONOMER"/>
<dbReference type="BioGRID-ORCS" id="856428">
    <property type="hits" value="3 hits in 10 CRISPR screens"/>
</dbReference>
<dbReference type="PRO" id="PR:P38690"/>
<dbReference type="Proteomes" id="UP000002311">
    <property type="component" value="Chromosome VIII"/>
</dbReference>
<dbReference type="RNAct" id="P38690">
    <property type="molecule type" value="protein"/>
</dbReference>
<dbReference type="GO" id="GO:0005737">
    <property type="term" value="C:cytoplasm"/>
    <property type="evidence" value="ECO:0007005"/>
    <property type="project" value="SGD"/>
</dbReference>
<dbReference type="GO" id="GO:0005829">
    <property type="term" value="C:cytosol"/>
    <property type="evidence" value="ECO:0000318"/>
    <property type="project" value="GO_Central"/>
</dbReference>
<dbReference type="GO" id="GO:0005524">
    <property type="term" value="F:ATP binding"/>
    <property type="evidence" value="ECO:0007669"/>
    <property type="project" value="UniProtKB-KW"/>
</dbReference>
<dbReference type="GO" id="GO:0004349">
    <property type="term" value="F:glutamate 5-kinase activity"/>
    <property type="evidence" value="ECO:0000318"/>
    <property type="project" value="GO_Central"/>
</dbReference>
<dbReference type="GO" id="GO:0003723">
    <property type="term" value="F:RNA binding"/>
    <property type="evidence" value="ECO:0007669"/>
    <property type="project" value="InterPro"/>
</dbReference>
<dbReference type="GO" id="GO:0006561">
    <property type="term" value="P:proline biosynthetic process"/>
    <property type="evidence" value="ECO:0000318"/>
    <property type="project" value="GO_Central"/>
</dbReference>
<dbReference type="CDD" id="cd04242">
    <property type="entry name" value="AAK_G5K_ProB"/>
    <property type="match status" value="1"/>
</dbReference>
<dbReference type="CDD" id="cd21157">
    <property type="entry name" value="PUA_G5K"/>
    <property type="match status" value="1"/>
</dbReference>
<dbReference type="FunFam" id="2.30.130.10:FF:000008">
    <property type="entry name" value="Glutamate 5-kinase"/>
    <property type="match status" value="1"/>
</dbReference>
<dbReference type="FunFam" id="3.40.1160.10:FF:000020">
    <property type="entry name" value="Glutamate 5-kinase"/>
    <property type="match status" value="1"/>
</dbReference>
<dbReference type="Gene3D" id="3.40.1160.10">
    <property type="entry name" value="Acetylglutamate kinase-like"/>
    <property type="match status" value="2"/>
</dbReference>
<dbReference type="Gene3D" id="2.30.130.10">
    <property type="entry name" value="PUA domain"/>
    <property type="match status" value="1"/>
</dbReference>
<dbReference type="HAMAP" id="MF_00456">
    <property type="entry name" value="ProB"/>
    <property type="match status" value="1"/>
</dbReference>
<dbReference type="InterPro" id="IPR036393">
    <property type="entry name" value="AceGlu_kinase-like_sf"/>
</dbReference>
<dbReference type="InterPro" id="IPR001048">
    <property type="entry name" value="Asp/Glu/Uridylate_kinase"/>
</dbReference>
<dbReference type="InterPro" id="IPR041739">
    <property type="entry name" value="G5K_ProB"/>
</dbReference>
<dbReference type="InterPro" id="IPR001057">
    <property type="entry name" value="Glu/AcGlu_kinase"/>
</dbReference>
<dbReference type="InterPro" id="IPR011529">
    <property type="entry name" value="Glu_5kinase"/>
</dbReference>
<dbReference type="InterPro" id="IPR005715">
    <property type="entry name" value="Glu_5kinase/COase_Synthase"/>
</dbReference>
<dbReference type="InterPro" id="IPR019797">
    <property type="entry name" value="Glutamate_5-kinase_CS"/>
</dbReference>
<dbReference type="InterPro" id="IPR002478">
    <property type="entry name" value="PUA"/>
</dbReference>
<dbReference type="InterPro" id="IPR015947">
    <property type="entry name" value="PUA-like_sf"/>
</dbReference>
<dbReference type="InterPro" id="IPR036974">
    <property type="entry name" value="PUA_sf"/>
</dbReference>
<dbReference type="NCBIfam" id="TIGR01027">
    <property type="entry name" value="proB"/>
    <property type="match status" value="1"/>
</dbReference>
<dbReference type="PANTHER" id="PTHR43654">
    <property type="entry name" value="GLUTAMATE 5-KINASE"/>
    <property type="match status" value="1"/>
</dbReference>
<dbReference type="PANTHER" id="PTHR43654:SF3">
    <property type="entry name" value="GLUTAMATE 5-KINASE"/>
    <property type="match status" value="1"/>
</dbReference>
<dbReference type="Pfam" id="PF00696">
    <property type="entry name" value="AA_kinase"/>
    <property type="match status" value="1"/>
</dbReference>
<dbReference type="Pfam" id="PF01472">
    <property type="entry name" value="PUA"/>
    <property type="match status" value="1"/>
</dbReference>
<dbReference type="PIRSF" id="PIRSF000729">
    <property type="entry name" value="GK"/>
    <property type="match status" value="1"/>
</dbReference>
<dbReference type="PRINTS" id="PR00474">
    <property type="entry name" value="GLU5KINASE"/>
</dbReference>
<dbReference type="SMART" id="SM00359">
    <property type="entry name" value="PUA"/>
    <property type="match status" value="1"/>
</dbReference>
<dbReference type="SUPFAM" id="SSF53633">
    <property type="entry name" value="Carbamate kinase-like"/>
    <property type="match status" value="1"/>
</dbReference>
<dbReference type="SUPFAM" id="SSF88697">
    <property type="entry name" value="PUA domain-like"/>
    <property type="match status" value="1"/>
</dbReference>
<dbReference type="PROSITE" id="PS00902">
    <property type="entry name" value="GLUTAMATE_5_KINASE"/>
    <property type="match status" value="1"/>
</dbReference>
<dbReference type="PROSITE" id="PS50890">
    <property type="entry name" value="PUA"/>
    <property type="match status" value="1"/>
</dbReference>
<reference key="1">
    <citation type="journal article" date="1994" name="Science">
        <title>Complete nucleotide sequence of Saccharomyces cerevisiae chromosome VIII.</title>
        <authorList>
            <person name="Johnston M."/>
            <person name="Andrews S."/>
            <person name="Brinkman R."/>
            <person name="Cooper J."/>
            <person name="Ding H."/>
            <person name="Dover J."/>
            <person name="Du Z."/>
            <person name="Favello A."/>
            <person name="Fulton L."/>
            <person name="Gattung S."/>
            <person name="Geisel C."/>
            <person name="Kirsten J."/>
            <person name="Kucaba T."/>
            <person name="Hillier L.W."/>
            <person name="Jier M."/>
            <person name="Johnston L."/>
            <person name="Langston Y."/>
            <person name="Latreille P."/>
            <person name="Louis E.J."/>
            <person name="Macri C."/>
            <person name="Mardis E."/>
            <person name="Menezes S."/>
            <person name="Mouser L."/>
            <person name="Nhan M."/>
            <person name="Rifkin L."/>
            <person name="Riles L."/>
            <person name="St Peter H."/>
            <person name="Trevaskis E."/>
            <person name="Vaughan K."/>
            <person name="Vignati D."/>
            <person name="Wilcox L."/>
            <person name="Wohldman P."/>
            <person name="Waterston R."/>
            <person name="Wilson R."/>
            <person name="Vaudin M."/>
        </authorList>
    </citation>
    <scope>NUCLEOTIDE SEQUENCE [LARGE SCALE GENOMIC DNA]</scope>
    <source>
        <strain>ATCC 204508 / S288c</strain>
    </source>
</reference>
<reference key="2">
    <citation type="journal article" date="2014" name="G3 (Bethesda)">
        <title>The reference genome sequence of Saccharomyces cerevisiae: Then and now.</title>
        <authorList>
            <person name="Engel S.R."/>
            <person name="Dietrich F.S."/>
            <person name="Fisk D.G."/>
            <person name="Binkley G."/>
            <person name="Balakrishnan R."/>
            <person name="Costanzo M.C."/>
            <person name="Dwight S.S."/>
            <person name="Hitz B.C."/>
            <person name="Karra K."/>
            <person name="Nash R.S."/>
            <person name="Weng S."/>
            <person name="Wong E.D."/>
            <person name="Lloyd P."/>
            <person name="Skrzypek M.S."/>
            <person name="Miyasato S.R."/>
            <person name="Simison M."/>
            <person name="Cherry J.M."/>
        </authorList>
    </citation>
    <scope>GENOME REANNOTATION</scope>
    <source>
        <strain>ATCC 204508 / S288c</strain>
    </source>
</reference>
<reference key="3">
    <citation type="journal article" date="2007" name="Genome Res.">
        <title>Approaching a complete repository of sequence-verified protein-encoding clones for Saccharomyces cerevisiae.</title>
        <authorList>
            <person name="Hu Y."/>
            <person name="Rolfs A."/>
            <person name="Bhullar B."/>
            <person name="Murthy T.V.S."/>
            <person name="Zhu C."/>
            <person name="Berger M.F."/>
            <person name="Camargo A.A."/>
            <person name="Kelley F."/>
            <person name="McCarron S."/>
            <person name="Jepson D."/>
            <person name="Richardson A."/>
            <person name="Raphael J."/>
            <person name="Moreira D."/>
            <person name="Taycher E."/>
            <person name="Zuo D."/>
            <person name="Mohr S."/>
            <person name="Kane M.F."/>
            <person name="Williamson J."/>
            <person name="Simpson A.J.G."/>
            <person name="Bulyk M.L."/>
            <person name="Harlow E."/>
            <person name="Marsischky G."/>
            <person name="Kolodner R.D."/>
            <person name="LaBaer J."/>
        </authorList>
    </citation>
    <scope>NUCLEOTIDE SEQUENCE [GENOMIC DNA]</scope>
    <source>
        <strain>ATCC 204508 / S288c</strain>
    </source>
</reference>
<reference key="4">
    <citation type="journal article" date="2002" name="Genes Dev.">
        <title>Subcellular localization of the yeast proteome.</title>
        <authorList>
            <person name="Kumar A."/>
            <person name="Agarwal S."/>
            <person name="Heyman J.A."/>
            <person name="Matson S."/>
            <person name="Heidtman M."/>
            <person name="Piccirillo S."/>
            <person name="Umansky L."/>
            <person name="Drawid A."/>
            <person name="Jansen R."/>
            <person name="Liu Y."/>
            <person name="Cheung K.-H."/>
            <person name="Miller P."/>
            <person name="Gerstein M."/>
            <person name="Roeder G.S."/>
            <person name="Snyder M."/>
        </authorList>
    </citation>
    <scope>SUBCELLULAR LOCATION</scope>
</reference>
<keyword id="KW-0028">Amino-acid biosynthesis</keyword>
<keyword id="KW-0067">ATP-binding</keyword>
<keyword id="KW-0963">Cytoplasm</keyword>
<keyword id="KW-0418">Kinase</keyword>
<keyword id="KW-0547">Nucleotide-binding</keyword>
<keyword id="KW-0641">Proline biosynthesis</keyword>
<keyword id="KW-1185">Reference proteome</keyword>
<keyword id="KW-0808">Transferase</keyword>
<accession>P38690</accession>
<accession>D3DKY0</accession>
<accession>Q66R86</accession>
<comment type="subcellular location">
    <subcellularLocation>
        <location evidence="2">Cytoplasm</location>
    </subcellularLocation>
</comment>
<comment type="similarity">
    <text evidence="3">Belongs to the glutamate 5-kinase family.</text>
</comment>
<feature type="chain" id="PRO_0000109779" description="Uncharacterized protein YHR033W">
    <location>
        <begin position="1"/>
        <end position="423"/>
    </location>
</feature>
<feature type="domain" description="PUA">
    <location>
        <begin position="315"/>
        <end position="406"/>
    </location>
</feature>
<feature type="binding site" evidence="1">
    <location>
        <position position="51"/>
    </location>
    <ligand>
        <name>substrate</name>
    </ligand>
</feature>
<feature type="binding site" evidence="1">
    <location>
        <position position="138"/>
    </location>
    <ligand>
        <name>substrate</name>
    </ligand>
</feature>
<feature type="binding site" evidence="1">
    <location>
        <position position="150"/>
    </location>
    <ligand>
        <name>substrate</name>
    </ligand>
</feature>
<feature type="binding site" evidence="1">
    <location>
        <begin position="170"/>
        <end position="171"/>
    </location>
    <ligand>
        <name>ATP</name>
        <dbReference type="ChEBI" id="CHEBI:30616"/>
    </ligand>
</feature>
<feature type="binding site" evidence="1">
    <location>
        <begin position="214"/>
        <end position="220"/>
    </location>
    <ligand>
        <name>ATP</name>
        <dbReference type="ChEBI" id="CHEBI:30616"/>
    </ligand>
</feature>
<feature type="sequence conflict" description="In Ref. 3; AAU09740." evidence="3" ref="3">
    <original>N</original>
    <variation>D</variation>
    <location>
        <position position="117"/>
    </location>
</feature>
<name>YHJ3_YEAST</name>
<protein>
    <recommendedName>
        <fullName>Uncharacterized protein YHR033W</fullName>
    </recommendedName>
</protein>
<sequence length="423" mass="46864">MTKAYTIVIKLGSSSLVDESTKEPKLSIMTLIVETVTNLKRMGHKVIIVSSGGIAVGLDALNIPHKPKQLSEVQAIAAVGQGRLIARWNMLFSQYGEQTAQILLTRNDILRWNQYNNARNTINELLAMGVIPIVNENDTLSISEIEFGDNDTLSAITAALVGADFLFLLTDVDCLYTDNPRTNPDARPIVLVPELSEGLPGVNTSSGSGSEVGTGGMRTKLIAADLASNAGIETIVMKSDRPEYVPKIVDYIQHHFRPPRHIGNGTQQQFLDLQDTELEQLRRYDVPMHTKFLANDNKHKLKNREFWILHGLITKGAIIIDENSYDKLLSKDMASLTPNAVIEVRDNFHELECVDLKIGQRLPNGELDISKPIQSVGCVRSNYTSLELAKIKGLPSEKIHDVLGYSVSEYVAHRENIAFPPQF</sequence>
<organism>
    <name type="scientific">Saccharomyces cerevisiae (strain ATCC 204508 / S288c)</name>
    <name type="common">Baker's yeast</name>
    <dbReference type="NCBI Taxonomy" id="559292"/>
    <lineage>
        <taxon>Eukaryota</taxon>
        <taxon>Fungi</taxon>
        <taxon>Dikarya</taxon>
        <taxon>Ascomycota</taxon>
        <taxon>Saccharomycotina</taxon>
        <taxon>Saccharomycetes</taxon>
        <taxon>Saccharomycetales</taxon>
        <taxon>Saccharomycetaceae</taxon>
        <taxon>Saccharomyces</taxon>
    </lineage>
</organism>
<proteinExistence type="inferred from homology"/>